<reference key="1">
    <citation type="submission" date="2006-04" db="EMBL/GenBank/DDBJ databases">
        <title>Complete sequence of chromosome of Deinococcus geothermalis DSM 11300.</title>
        <authorList>
            <person name="Copeland A."/>
            <person name="Lucas S."/>
            <person name="Lapidus A."/>
            <person name="Barry K."/>
            <person name="Detter J.C."/>
            <person name="Glavina del Rio T."/>
            <person name="Hammon N."/>
            <person name="Israni S."/>
            <person name="Dalin E."/>
            <person name="Tice H."/>
            <person name="Pitluck S."/>
            <person name="Brettin T."/>
            <person name="Bruce D."/>
            <person name="Han C."/>
            <person name="Tapia R."/>
            <person name="Saunders E."/>
            <person name="Gilna P."/>
            <person name="Schmutz J."/>
            <person name="Larimer F."/>
            <person name="Land M."/>
            <person name="Hauser L."/>
            <person name="Kyrpides N."/>
            <person name="Kim E."/>
            <person name="Daly M.J."/>
            <person name="Fredrickson J.K."/>
            <person name="Makarova K.S."/>
            <person name="Gaidamakova E.K."/>
            <person name="Zhai M."/>
            <person name="Richardson P."/>
        </authorList>
    </citation>
    <scope>NUCLEOTIDE SEQUENCE [LARGE SCALE GENOMIC DNA]</scope>
    <source>
        <strain>DSM 11300 / CIP 105573 / AG-3a</strain>
    </source>
</reference>
<name>RPOC_DEIGD</name>
<comment type="function">
    <text evidence="1">DNA-dependent RNA polymerase catalyzes the transcription of DNA into RNA using the four ribonucleoside triphosphates as substrates.</text>
</comment>
<comment type="catalytic activity">
    <reaction evidence="1">
        <text>RNA(n) + a ribonucleoside 5'-triphosphate = RNA(n+1) + diphosphate</text>
        <dbReference type="Rhea" id="RHEA:21248"/>
        <dbReference type="Rhea" id="RHEA-COMP:14527"/>
        <dbReference type="Rhea" id="RHEA-COMP:17342"/>
        <dbReference type="ChEBI" id="CHEBI:33019"/>
        <dbReference type="ChEBI" id="CHEBI:61557"/>
        <dbReference type="ChEBI" id="CHEBI:140395"/>
        <dbReference type="EC" id="2.7.7.6"/>
    </reaction>
</comment>
<comment type="cofactor">
    <cofactor evidence="1">
        <name>Mg(2+)</name>
        <dbReference type="ChEBI" id="CHEBI:18420"/>
    </cofactor>
    <text evidence="1">Binds 1 Mg(2+) ion per subunit.</text>
</comment>
<comment type="cofactor">
    <cofactor evidence="1">
        <name>Zn(2+)</name>
        <dbReference type="ChEBI" id="CHEBI:29105"/>
    </cofactor>
    <text evidence="1">Binds 2 Zn(2+) ions per subunit.</text>
</comment>
<comment type="subunit">
    <text evidence="1">The RNAP catalytic core consists of 2 alpha, 1 beta, 1 beta' and 1 omega subunit. When a sigma factor is associated with the core the holoenzyme is formed, which can initiate transcription.</text>
</comment>
<comment type="similarity">
    <text evidence="1">Belongs to the RNA polymerase beta' chain family.</text>
</comment>
<protein>
    <recommendedName>
        <fullName evidence="1">DNA-directed RNA polymerase subunit beta'</fullName>
        <shortName evidence="1">RNAP subunit beta'</shortName>
        <ecNumber evidence="1">2.7.7.6</ecNumber>
    </recommendedName>
    <alternativeName>
        <fullName evidence="1">RNA polymerase subunit beta'</fullName>
    </alternativeName>
    <alternativeName>
        <fullName evidence="1">Transcriptase subunit beta'</fullName>
    </alternativeName>
</protein>
<feature type="chain" id="PRO_0000308832" description="DNA-directed RNA polymerase subunit beta'">
    <location>
        <begin position="1"/>
        <end position="1537"/>
    </location>
</feature>
<feature type="region of interest" description="Disordered" evidence="2">
    <location>
        <begin position="1502"/>
        <end position="1537"/>
    </location>
</feature>
<feature type="compositionally biased region" description="Polar residues" evidence="2">
    <location>
        <begin position="1506"/>
        <end position="1519"/>
    </location>
</feature>
<feature type="compositionally biased region" description="Polar residues" evidence="2">
    <location>
        <begin position="1526"/>
        <end position="1537"/>
    </location>
</feature>
<feature type="binding site" evidence="1">
    <location>
        <position position="57"/>
    </location>
    <ligand>
        <name>Zn(2+)</name>
        <dbReference type="ChEBI" id="CHEBI:29105"/>
        <label>1</label>
    </ligand>
</feature>
<feature type="binding site" evidence="1">
    <location>
        <position position="59"/>
    </location>
    <ligand>
        <name>Zn(2+)</name>
        <dbReference type="ChEBI" id="CHEBI:29105"/>
        <label>1</label>
    </ligand>
</feature>
<feature type="binding site" evidence="1">
    <location>
        <position position="72"/>
    </location>
    <ligand>
        <name>Zn(2+)</name>
        <dbReference type="ChEBI" id="CHEBI:29105"/>
        <label>1</label>
    </ligand>
</feature>
<feature type="binding site" evidence="1">
    <location>
        <position position="75"/>
    </location>
    <ligand>
        <name>Zn(2+)</name>
        <dbReference type="ChEBI" id="CHEBI:29105"/>
        <label>1</label>
    </ligand>
</feature>
<feature type="binding site" evidence="1">
    <location>
        <position position="746"/>
    </location>
    <ligand>
        <name>Mg(2+)</name>
        <dbReference type="ChEBI" id="CHEBI:18420"/>
    </ligand>
</feature>
<feature type="binding site" evidence="1">
    <location>
        <position position="748"/>
    </location>
    <ligand>
        <name>Mg(2+)</name>
        <dbReference type="ChEBI" id="CHEBI:18420"/>
    </ligand>
</feature>
<feature type="binding site" evidence="1">
    <location>
        <position position="750"/>
    </location>
    <ligand>
        <name>Mg(2+)</name>
        <dbReference type="ChEBI" id="CHEBI:18420"/>
    </ligand>
</feature>
<feature type="binding site" evidence="1">
    <location>
        <position position="1120"/>
    </location>
    <ligand>
        <name>Zn(2+)</name>
        <dbReference type="ChEBI" id="CHEBI:29105"/>
        <label>2</label>
    </ligand>
</feature>
<feature type="binding site" evidence="1">
    <location>
        <position position="1201"/>
    </location>
    <ligand>
        <name>Zn(2+)</name>
        <dbReference type="ChEBI" id="CHEBI:29105"/>
        <label>2</label>
    </ligand>
</feature>
<feature type="binding site" evidence="1">
    <location>
        <position position="1208"/>
    </location>
    <ligand>
        <name>Zn(2+)</name>
        <dbReference type="ChEBI" id="CHEBI:29105"/>
        <label>2</label>
    </ligand>
</feature>
<feature type="binding site" evidence="1">
    <location>
        <position position="1211"/>
    </location>
    <ligand>
        <name>Zn(2+)</name>
        <dbReference type="ChEBI" id="CHEBI:29105"/>
        <label>2</label>
    </ligand>
</feature>
<keyword id="KW-0240">DNA-directed RNA polymerase</keyword>
<keyword id="KW-0460">Magnesium</keyword>
<keyword id="KW-0479">Metal-binding</keyword>
<keyword id="KW-0548">Nucleotidyltransferase</keyword>
<keyword id="KW-0804">Transcription</keyword>
<keyword id="KW-0808">Transferase</keyword>
<keyword id="KW-0862">Zinc</keyword>
<dbReference type="EC" id="2.7.7.6" evidence="1"/>
<dbReference type="EMBL" id="CP000359">
    <property type="protein sequence ID" value="ABF44937.1"/>
    <property type="molecule type" value="Genomic_DNA"/>
</dbReference>
<dbReference type="RefSeq" id="WP_011529778.1">
    <property type="nucleotide sequence ID" value="NC_008025.1"/>
</dbReference>
<dbReference type="SMR" id="Q1J0P7"/>
<dbReference type="STRING" id="319795.Dgeo_0635"/>
<dbReference type="KEGG" id="dge:Dgeo_0635"/>
<dbReference type="eggNOG" id="COG0086">
    <property type="taxonomic scope" value="Bacteria"/>
</dbReference>
<dbReference type="HOGENOM" id="CLU_000524_3_0_0"/>
<dbReference type="Proteomes" id="UP000002431">
    <property type="component" value="Chromosome"/>
</dbReference>
<dbReference type="GO" id="GO:0000428">
    <property type="term" value="C:DNA-directed RNA polymerase complex"/>
    <property type="evidence" value="ECO:0007669"/>
    <property type="project" value="UniProtKB-KW"/>
</dbReference>
<dbReference type="GO" id="GO:0003677">
    <property type="term" value="F:DNA binding"/>
    <property type="evidence" value="ECO:0007669"/>
    <property type="project" value="UniProtKB-UniRule"/>
</dbReference>
<dbReference type="GO" id="GO:0003899">
    <property type="term" value="F:DNA-directed RNA polymerase activity"/>
    <property type="evidence" value="ECO:0007669"/>
    <property type="project" value="UniProtKB-UniRule"/>
</dbReference>
<dbReference type="GO" id="GO:0000287">
    <property type="term" value="F:magnesium ion binding"/>
    <property type="evidence" value="ECO:0007669"/>
    <property type="project" value="UniProtKB-UniRule"/>
</dbReference>
<dbReference type="GO" id="GO:0008270">
    <property type="term" value="F:zinc ion binding"/>
    <property type="evidence" value="ECO:0007669"/>
    <property type="project" value="UniProtKB-UniRule"/>
</dbReference>
<dbReference type="GO" id="GO:0006351">
    <property type="term" value="P:DNA-templated transcription"/>
    <property type="evidence" value="ECO:0007669"/>
    <property type="project" value="UniProtKB-UniRule"/>
</dbReference>
<dbReference type="CDD" id="cd02655">
    <property type="entry name" value="RNAP_beta'_C"/>
    <property type="match status" value="1"/>
</dbReference>
<dbReference type="CDD" id="cd01609">
    <property type="entry name" value="RNAP_beta'_N"/>
    <property type="match status" value="1"/>
</dbReference>
<dbReference type="Gene3D" id="1.10.132.30">
    <property type="match status" value="1"/>
</dbReference>
<dbReference type="Gene3D" id="1.10.150.390">
    <property type="match status" value="1"/>
</dbReference>
<dbReference type="Gene3D" id="1.10.1790.20">
    <property type="match status" value="1"/>
</dbReference>
<dbReference type="Gene3D" id="1.10.40.90">
    <property type="match status" value="1"/>
</dbReference>
<dbReference type="Gene3D" id="2.40.40.20">
    <property type="match status" value="1"/>
</dbReference>
<dbReference type="Gene3D" id="2.40.50.100">
    <property type="match status" value="4"/>
</dbReference>
<dbReference type="Gene3D" id="3.90.105.10">
    <property type="entry name" value="Molybdopterin biosynthesis moea protein, domain 2"/>
    <property type="match status" value="1"/>
</dbReference>
<dbReference type="Gene3D" id="4.10.860.120">
    <property type="entry name" value="RNA polymerase II, clamp domain"/>
    <property type="match status" value="1"/>
</dbReference>
<dbReference type="Gene3D" id="1.10.274.100">
    <property type="entry name" value="RNA polymerase Rpb1, domain 3"/>
    <property type="match status" value="1"/>
</dbReference>
<dbReference type="HAMAP" id="MF_01322">
    <property type="entry name" value="RNApol_bact_RpoC"/>
    <property type="match status" value="1"/>
</dbReference>
<dbReference type="InterPro" id="IPR045867">
    <property type="entry name" value="DNA-dir_RpoC_beta_prime"/>
</dbReference>
<dbReference type="InterPro" id="IPR012754">
    <property type="entry name" value="DNA-dir_RpoC_beta_prime_bact"/>
</dbReference>
<dbReference type="InterPro" id="IPR000722">
    <property type="entry name" value="RNA_pol_asu"/>
</dbReference>
<dbReference type="InterPro" id="IPR006592">
    <property type="entry name" value="RNA_pol_N"/>
</dbReference>
<dbReference type="InterPro" id="IPR007080">
    <property type="entry name" value="RNA_pol_Rpb1_1"/>
</dbReference>
<dbReference type="InterPro" id="IPR007066">
    <property type="entry name" value="RNA_pol_Rpb1_3"/>
</dbReference>
<dbReference type="InterPro" id="IPR042102">
    <property type="entry name" value="RNA_pol_Rpb1_3_sf"/>
</dbReference>
<dbReference type="InterPro" id="IPR007083">
    <property type="entry name" value="RNA_pol_Rpb1_4"/>
</dbReference>
<dbReference type="InterPro" id="IPR007081">
    <property type="entry name" value="RNA_pol_Rpb1_5"/>
</dbReference>
<dbReference type="InterPro" id="IPR044893">
    <property type="entry name" value="RNA_pol_Rpb1_clamp_domain"/>
</dbReference>
<dbReference type="InterPro" id="IPR038120">
    <property type="entry name" value="Rpb1_funnel_sf"/>
</dbReference>
<dbReference type="InterPro" id="IPR048566">
    <property type="entry name" value="RpoC_hybrid"/>
</dbReference>
<dbReference type="PANTHER" id="PTHR19376">
    <property type="entry name" value="DNA-DIRECTED RNA POLYMERASE"/>
    <property type="match status" value="1"/>
</dbReference>
<dbReference type="PANTHER" id="PTHR19376:SF54">
    <property type="entry name" value="DNA-DIRECTED RNA POLYMERASE SUBUNIT BETA"/>
    <property type="match status" value="1"/>
</dbReference>
<dbReference type="Pfam" id="PF04997">
    <property type="entry name" value="RNA_pol_Rpb1_1"/>
    <property type="match status" value="2"/>
</dbReference>
<dbReference type="Pfam" id="PF00623">
    <property type="entry name" value="RNA_pol_Rpb1_2"/>
    <property type="match status" value="1"/>
</dbReference>
<dbReference type="Pfam" id="PF04983">
    <property type="entry name" value="RNA_pol_Rpb1_3"/>
    <property type="match status" value="1"/>
</dbReference>
<dbReference type="Pfam" id="PF05000">
    <property type="entry name" value="RNA_pol_Rpb1_4"/>
    <property type="match status" value="1"/>
</dbReference>
<dbReference type="Pfam" id="PF04998">
    <property type="entry name" value="RNA_pol_Rpb1_5"/>
    <property type="match status" value="1"/>
</dbReference>
<dbReference type="Pfam" id="PF21668">
    <property type="entry name" value="RPOC_hybrid"/>
    <property type="match status" value="1"/>
</dbReference>
<dbReference type="SMART" id="SM00663">
    <property type="entry name" value="RPOLA_N"/>
    <property type="match status" value="1"/>
</dbReference>
<dbReference type="SUPFAM" id="SSF64484">
    <property type="entry name" value="beta and beta-prime subunits of DNA dependent RNA-polymerase"/>
    <property type="match status" value="1"/>
</dbReference>
<evidence type="ECO:0000255" key="1">
    <source>
        <dbReference type="HAMAP-Rule" id="MF_01322"/>
    </source>
</evidence>
<evidence type="ECO:0000256" key="2">
    <source>
        <dbReference type="SAM" id="MobiDB-lite"/>
    </source>
</evidence>
<proteinExistence type="inferred from homology"/>
<accession>Q1J0P7</accession>
<gene>
    <name evidence="1" type="primary">rpoC</name>
    <name type="ordered locus">Dgeo_0635</name>
</gene>
<organism>
    <name type="scientific">Deinococcus geothermalis (strain DSM 11300 / CIP 105573 / AG-3a)</name>
    <dbReference type="NCBI Taxonomy" id="319795"/>
    <lineage>
        <taxon>Bacteria</taxon>
        <taxon>Thermotogati</taxon>
        <taxon>Deinococcota</taxon>
        <taxon>Deinococci</taxon>
        <taxon>Deinococcales</taxon>
        <taxon>Deinococcaceae</taxon>
        <taxon>Deinococcus</taxon>
    </lineage>
</organism>
<sequence>MKDFSKVRIAIASPAKIREWSFGEVEKPETINYRTLKPEREGLFDERIFGPIKDYECACGKYKRQRYEGKVCERCGVEVTSSKVRRYRMGHIDLATPAAHIWYVKDTPSKIGTLLDLSAAQLEKVLYFSSFLVTDPRNAQKDGRPLRRGELLSDDEYRELRFGRQETYTLPSGTEAAVRDGEYVTRGQVLGGNVVSKMDGLAQYRFPRRAEIAYAEEAEASLPLPSDVLVQQDSFRPGEILAELEGDVQITAPVDGTAFLLDMGEDSVLVELRDSAAEDAAQGEVLARVYIPHGMNVQVAEGEVVEAGSVLATAAAGDRLRVSRDSRLSNVNFPKKKGDVKVTAHWTRRVEYRIEPQMHVLVGDGSEVRKGQKVVGAIDKEEEVIAEADGVITLHAPASIIVSKARVYAYQDEPLVVNGDRVEPGDELADSGNLRSEISGRVEIDLVRKQVRVIESYDFEAKMGAEAVKELLDDLDLDQLEAELSEQMKDNSRHKRAKARKRLEVVRAFKRSGNHPSWMILETVPVMPPDLRPMVQVDGGRFATSDLNDLYRRLINRNNRLKKLIGQGAPDMIIRNEKRMLQEAVDALIDNGRRGSPVTNPGSDRSLRSLTDLLGGKQGRFRQNLLGKRVDYSGRSVIVVGPQLKLHQCGVPKRMALELFKPFLFKVLEEKGEVTNIKQARKMLERYRDTRDSVWDALEEVIEDKVVLLNRAPTLHRLGIQAFEPVLVEGQSIQLHPLVCEAFNADFDGDQMAIHVPLSAQAQAEARIQMLSAHNLLSPANGEPNVKPSRDIILGIFTLTQLRKDNLGAGSEFANEQDALKALDEGRVALNTPIRVNGVETSPGRLKYVFSSPDEAIMAVDRGEIDYQDHVRIRLNGTVYETSAGRVMFRRLVQEALGAQGHLVDTLVNLDTAYEKDSLKDMVMACYKELGIEATAGLLDALKDSGFKLSTISGITIGIDDIVLPPNKRELLAEADEKLAAIEQNYEFGFMTDEERYKQVVQLWNDTTDEVKNAVFENFSRNYPFNPLWIMSQSGARGNPQQIRQLAGMRGLMARPDGSTIEVPIRASFREGLTVLEYFISTHGARKGGADTALRTADSGYLTRKLVDVAHEVVVRDVDCGTTDYTVMPLGTTDERTGEWRTRKGSEIETAIYGRTLTADVELSDGRVIPAGQMLSLEDVKAITRDAKAIGEVFVRTPLNCRVRAGVCQKCYGYDLSQAKPVSLGEAVGVVAAESIGEPGTQLTMRTFHTGGVAGGGDITMGLPRVIELFEARKPKTQAVVADRDGVVRIEEEEERYLVRIEAEDEAFSSKTPMKISKSLRLIVRDGDHVEAGQPLTRGAINPHDLLLYKDTDAAQRYLVEEVQRVYRSQGVKVHDKHIEVIVRQMLRYVEITDGGDTDLLEGQTVERWEVDQANDALPEGKTPASWKPVLLGITKSSLTTKSWLSAASFQHTTHVLTEASMRGQVDELIGLKENVILGKLIPAGTGLTTVREMQVADERTLEKYGQTSVSTDAVTGSQRYDDTRPSSTSINPSYGD</sequence>